<name>FABG_STAEQ</name>
<organism>
    <name type="scientific">Staphylococcus epidermidis (strain ATCC 35984 / DSM 28319 / BCRC 17069 / CCUG 31568 / BM 3577 / RP62A)</name>
    <dbReference type="NCBI Taxonomy" id="176279"/>
    <lineage>
        <taxon>Bacteria</taxon>
        <taxon>Bacillati</taxon>
        <taxon>Bacillota</taxon>
        <taxon>Bacilli</taxon>
        <taxon>Bacillales</taxon>
        <taxon>Staphylococcaceae</taxon>
        <taxon>Staphylococcus</taxon>
    </lineage>
</organism>
<feature type="chain" id="PRO_0000054690" description="3-oxoacyl-[acyl-carrier-protein] reductase FabG">
    <location>
        <begin position="1"/>
        <end position="244"/>
    </location>
</feature>
<feature type="active site" description="Proton acceptor" evidence="2">
    <location>
        <position position="152"/>
    </location>
</feature>
<feature type="binding site" evidence="1">
    <location>
        <begin position="9"/>
        <end position="12"/>
    </location>
    <ligand>
        <name>NADP(+)</name>
        <dbReference type="ChEBI" id="CHEBI:58349"/>
    </ligand>
</feature>
<feature type="binding site" evidence="1">
    <location>
        <begin position="60"/>
        <end position="61"/>
    </location>
    <ligand>
        <name>NADP(+)</name>
        <dbReference type="ChEBI" id="CHEBI:58349"/>
    </ligand>
</feature>
<feature type="binding site" evidence="1">
    <location>
        <position position="87"/>
    </location>
    <ligand>
        <name>NADP(+)</name>
        <dbReference type="ChEBI" id="CHEBI:58349"/>
    </ligand>
</feature>
<feature type="binding site" evidence="1">
    <location>
        <position position="139"/>
    </location>
    <ligand>
        <name>substrate</name>
    </ligand>
</feature>
<feature type="binding site" evidence="1">
    <location>
        <begin position="152"/>
        <end position="156"/>
    </location>
    <ligand>
        <name>NADP(+)</name>
        <dbReference type="ChEBI" id="CHEBI:58349"/>
    </ligand>
</feature>
<feature type="binding site" evidence="1">
    <location>
        <position position="185"/>
    </location>
    <ligand>
        <name>NADP(+)</name>
        <dbReference type="ChEBI" id="CHEBI:58349"/>
    </ligand>
</feature>
<comment type="function">
    <text evidence="1">Catalyzes the NADPH-dependent reduction of beta-ketoacyl-ACP substrates to beta-hydroxyacyl-ACP products, the first reductive step in the elongation cycle of fatty acid biosynthesis.</text>
</comment>
<comment type="catalytic activity">
    <reaction>
        <text>a (3R)-hydroxyacyl-[ACP] + NADP(+) = a 3-oxoacyl-[ACP] + NADPH + H(+)</text>
        <dbReference type="Rhea" id="RHEA:17397"/>
        <dbReference type="Rhea" id="RHEA-COMP:9916"/>
        <dbReference type="Rhea" id="RHEA-COMP:9945"/>
        <dbReference type="ChEBI" id="CHEBI:15378"/>
        <dbReference type="ChEBI" id="CHEBI:57783"/>
        <dbReference type="ChEBI" id="CHEBI:58349"/>
        <dbReference type="ChEBI" id="CHEBI:78776"/>
        <dbReference type="ChEBI" id="CHEBI:78827"/>
        <dbReference type="EC" id="1.1.1.100"/>
    </reaction>
</comment>
<comment type="pathway">
    <text>Lipid metabolism; fatty acid biosynthesis.</text>
</comment>
<comment type="subunit">
    <text evidence="1">Homotetramer.</text>
</comment>
<comment type="similarity">
    <text evidence="3">Belongs to the short-chain dehydrogenases/reductases (SDR) family.</text>
</comment>
<accession>Q5HPW0</accession>
<proteinExistence type="inferred from homology"/>
<dbReference type="EC" id="1.1.1.100"/>
<dbReference type="EMBL" id="CP000029">
    <property type="protein sequence ID" value="AAW54128.1"/>
    <property type="molecule type" value="Genomic_DNA"/>
</dbReference>
<dbReference type="RefSeq" id="WP_001830161.1">
    <property type="nucleotide sequence ID" value="NC_002976.3"/>
</dbReference>
<dbReference type="SMR" id="Q5HPW0"/>
<dbReference type="STRING" id="176279.SERP0797"/>
<dbReference type="GeneID" id="50018956"/>
<dbReference type="KEGG" id="ser:SERP0797"/>
<dbReference type="eggNOG" id="COG1028">
    <property type="taxonomic scope" value="Bacteria"/>
</dbReference>
<dbReference type="HOGENOM" id="CLU_010194_1_3_9"/>
<dbReference type="UniPathway" id="UPA00094"/>
<dbReference type="Proteomes" id="UP000000531">
    <property type="component" value="Chromosome"/>
</dbReference>
<dbReference type="GO" id="GO:0004316">
    <property type="term" value="F:3-oxoacyl-[acyl-carrier-protein] reductase (NADPH) activity"/>
    <property type="evidence" value="ECO:0000250"/>
    <property type="project" value="UniProtKB"/>
</dbReference>
<dbReference type="GO" id="GO:0051287">
    <property type="term" value="F:NAD binding"/>
    <property type="evidence" value="ECO:0007669"/>
    <property type="project" value="InterPro"/>
</dbReference>
<dbReference type="GO" id="GO:0050661">
    <property type="term" value="F:NADP binding"/>
    <property type="evidence" value="ECO:0000250"/>
    <property type="project" value="UniProtKB"/>
</dbReference>
<dbReference type="GO" id="GO:0030497">
    <property type="term" value="P:fatty acid elongation"/>
    <property type="evidence" value="ECO:0000250"/>
    <property type="project" value="UniProtKB"/>
</dbReference>
<dbReference type="CDD" id="cd05333">
    <property type="entry name" value="BKR_SDR_c"/>
    <property type="match status" value="1"/>
</dbReference>
<dbReference type="FunFam" id="3.40.50.720:FF:000037">
    <property type="entry name" value="3-oxoacyl-[acyl-carrier-protein] reductase FabG"/>
    <property type="match status" value="1"/>
</dbReference>
<dbReference type="Gene3D" id="3.40.50.720">
    <property type="entry name" value="NAD(P)-binding Rossmann-like Domain"/>
    <property type="match status" value="1"/>
</dbReference>
<dbReference type="InterPro" id="IPR011284">
    <property type="entry name" value="3oxo_ACP_reduc"/>
</dbReference>
<dbReference type="InterPro" id="IPR036291">
    <property type="entry name" value="NAD(P)-bd_dom_sf"/>
</dbReference>
<dbReference type="InterPro" id="IPR020904">
    <property type="entry name" value="Sc_DH/Rdtase_CS"/>
</dbReference>
<dbReference type="InterPro" id="IPR050259">
    <property type="entry name" value="SDR"/>
</dbReference>
<dbReference type="InterPro" id="IPR002347">
    <property type="entry name" value="SDR_fam"/>
</dbReference>
<dbReference type="NCBIfam" id="TIGR01830">
    <property type="entry name" value="3oxo_ACP_reduc"/>
    <property type="match status" value="1"/>
</dbReference>
<dbReference type="NCBIfam" id="NF004198">
    <property type="entry name" value="PRK05653.1-3"/>
    <property type="match status" value="1"/>
</dbReference>
<dbReference type="NCBIfam" id="NF004199">
    <property type="entry name" value="PRK05653.1-4"/>
    <property type="match status" value="1"/>
</dbReference>
<dbReference type="NCBIfam" id="NF004200">
    <property type="entry name" value="PRK05653.1-5"/>
    <property type="match status" value="1"/>
</dbReference>
<dbReference type="NCBIfam" id="NF005559">
    <property type="entry name" value="PRK07231.1"/>
    <property type="match status" value="1"/>
</dbReference>
<dbReference type="NCBIfam" id="NF009464">
    <property type="entry name" value="PRK12824.1"/>
    <property type="match status" value="1"/>
</dbReference>
<dbReference type="NCBIfam" id="NF009466">
    <property type="entry name" value="PRK12826.1-2"/>
    <property type="match status" value="1"/>
</dbReference>
<dbReference type="PANTHER" id="PTHR42879">
    <property type="entry name" value="3-OXOACYL-(ACYL-CARRIER-PROTEIN) REDUCTASE"/>
    <property type="match status" value="1"/>
</dbReference>
<dbReference type="PANTHER" id="PTHR42879:SF2">
    <property type="entry name" value="3-OXOACYL-[ACYL-CARRIER-PROTEIN] REDUCTASE FABG"/>
    <property type="match status" value="1"/>
</dbReference>
<dbReference type="Pfam" id="PF13561">
    <property type="entry name" value="adh_short_C2"/>
    <property type="match status" value="1"/>
</dbReference>
<dbReference type="PRINTS" id="PR00081">
    <property type="entry name" value="GDHRDH"/>
</dbReference>
<dbReference type="PRINTS" id="PR00080">
    <property type="entry name" value="SDRFAMILY"/>
</dbReference>
<dbReference type="SMART" id="SM00822">
    <property type="entry name" value="PKS_KR"/>
    <property type="match status" value="1"/>
</dbReference>
<dbReference type="SUPFAM" id="SSF51735">
    <property type="entry name" value="NAD(P)-binding Rossmann-fold domains"/>
    <property type="match status" value="1"/>
</dbReference>
<dbReference type="PROSITE" id="PS00061">
    <property type="entry name" value="ADH_SHORT"/>
    <property type="match status" value="1"/>
</dbReference>
<evidence type="ECO:0000250" key="1"/>
<evidence type="ECO:0000255" key="2">
    <source>
        <dbReference type="PROSITE-ProRule" id="PRU10001"/>
    </source>
</evidence>
<evidence type="ECO:0000305" key="3"/>
<gene>
    <name type="primary">fabG</name>
    <name type="ordered locus">SERP0797</name>
</gene>
<protein>
    <recommendedName>
        <fullName>3-oxoacyl-[acyl-carrier-protein] reductase FabG</fullName>
        <ecNumber>1.1.1.100</ecNumber>
    </recommendedName>
    <alternativeName>
        <fullName>3-ketoacyl-acyl carrier protein reductase</fullName>
    </alternativeName>
    <alternativeName>
        <fullName>Beta-Ketoacyl-acyl carrier protein reductase</fullName>
    </alternativeName>
    <alternativeName>
        <fullName>Beta-ketoacyl-ACP reductase</fullName>
    </alternativeName>
</protein>
<sequence length="244" mass="26074">MNKSALVTGASRGIGRSIALQLAEEGYNVAVNYAGSKDKAEAVVEEIKAKGVESFAIQANVAKGDEVKEMIKEVVSQFGSVDVLVNNAGITKDNLLMRMKEQEWDDVIDTNLKGVFNCIQKVTPQMLRQRSGAIINLTSIVGAMGNPGQANYVATKAGVIGLTKTAARELASRGITVNAVAPGFIVSDMTNALSDDLKDQMLEQIPLKRFGEDTDIANTVAFLASDKAKYITGQTIHVNGGMYM</sequence>
<keyword id="KW-0275">Fatty acid biosynthesis</keyword>
<keyword id="KW-0276">Fatty acid metabolism</keyword>
<keyword id="KW-0444">Lipid biosynthesis</keyword>
<keyword id="KW-0443">Lipid metabolism</keyword>
<keyword id="KW-0521">NADP</keyword>
<keyword id="KW-0560">Oxidoreductase</keyword>
<keyword id="KW-1185">Reference proteome</keyword>
<reference key="1">
    <citation type="journal article" date="2005" name="J. Bacteriol.">
        <title>Insights on evolution of virulence and resistance from the complete genome analysis of an early methicillin-resistant Staphylococcus aureus strain and a biofilm-producing methicillin-resistant Staphylococcus epidermidis strain.</title>
        <authorList>
            <person name="Gill S.R."/>
            <person name="Fouts D.E."/>
            <person name="Archer G.L."/>
            <person name="Mongodin E.F."/>
            <person name="DeBoy R.T."/>
            <person name="Ravel J."/>
            <person name="Paulsen I.T."/>
            <person name="Kolonay J.F."/>
            <person name="Brinkac L.M."/>
            <person name="Beanan M.J."/>
            <person name="Dodson R.J."/>
            <person name="Daugherty S.C."/>
            <person name="Madupu R."/>
            <person name="Angiuoli S.V."/>
            <person name="Durkin A.S."/>
            <person name="Haft D.H."/>
            <person name="Vamathevan J.J."/>
            <person name="Khouri H."/>
            <person name="Utterback T.R."/>
            <person name="Lee C."/>
            <person name="Dimitrov G."/>
            <person name="Jiang L."/>
            <person name="Qin H."/>
            <person name="Weidman J."/>
            <person name="Tran K."/>
            <person name="Kang K.H."/>
            <person name="Hance I.R."/>
            <person name="Nelson K.E."/>
            <person name="Fraser C.M."/>
        </authorList>
    </citation>
    <scope>NUCLEOTIDE SEQUENCE [LARGE SCALE GENOMIC DNA]</scope>
    <source>
        <strain>ATCC 35984 / DSM 28319 / BCRC 17069 / CCUG 31568 / BM 3577 / RP62A</strain>
    </source>
</reference>